<accession>B5YE53</accession>
<organism>
    <name type="scientific">Dictyoglomus thermophilum (strain ATCC 35947 / DSM 3960 / H-6-12)</name>
    <dbReference type="NCBI Taxonomy" id="309799"/>
    <lineage>
        <taxon>Bacteria</taxon>
        <taxon>Pseudomonadati</taxon>
        <taxon>Dictyoglomota</taxon>
        <taxon>Dictyoglomia</taxon>
        <taxon>Dictyoglomales</taxon>
        <taxon>Dictyoglomaceae</taxon>
        <taxon>Dictyoglomus</taxon>
    </lineage>
</organism>
<gene>
    <name evidence="1" type="primary">clpX</name>
    <name type="ordered locus">DICTH_0961</name>
</gene>
<dbReference type="EMBL" id="CP001146">
    <property type="protein sequence ID" value="ACI18479.1"/>
    <property type="molecule type" value="Genomic_DNA"/>
</dbReference>
<dbReference type="RefSeq" id="WP_012547111.1">
    <property type="nucleotide sequence ID" value="NC_011297.1"/>
</dbReference>
<dbReference type="SMR" id="B5YE53"/>
<dbReference type="STRING" id="309799.DICTH_0961"/>
<dbReference type="PaxDb" id="309799-DICTH_0961"/>
<dbReference type="KEGG" id="dth:DICTH_0961"/>
<dbReference type="eggNOG" id="COG1219">
    <property type="taxonomic scope" value="Bacteria"/>
</dbReference>
<dbReference type="HOGENOM" id="CLU_014218_8_2_0"/>
<dbReference type="OrthoDB" id="9804062at2"/>
<dbReference type="Proteomes" id="UP000001733">
    <property type="component" value="Chromosome"/>
</dbReference>
<dbReference type="GO" id="GO:0009376">
    <property type="term" value="C:HslUV protease complex"/>
    <property type="evidence" value="ECO:0007669"/>
    <property type="project" value="TreeGrafter"/>
</dbReference>
<dbReference type="GO" id="GO:0005524">
    <property type="term" value="F:ATP binding"/>
    <property type="evidence" value="ECO:0007669"/>
    <property type="project" value="UniProtKB-UniRule"/>
</dbReference>
<dbReference type="GO" id="GO:0016887">
    <property type="term" value="F:ATP hydrolysis activity"/>
    <property type="evidence" value="ECO:0007669"/>
    <property type="project" value="InterPro"/>
</dbReference>
<dbReference type="GO" id="GO:0140662">
    <property type="term" value="F:ATP-dependent protein folding chaperone"/>
    <property type="evidence" value="ECO:0007669"/>
    <property type="project" value="InterPro"/>
</dbReference>
<dbReference type="GO" id="GO:0046983">
    <property type="term" value="F:protein dimerization activity"/>
    <property type="evidence" value="ECO:0007669"/>
    <property type="project" value="InterPro"/>
</dbReference>
<dbReference type="GO" id="GO:0051082">
    <property type="term" value="F:unfolded protein binding"/>
    <property type="evidence" value="ECO:0007669"/>
    <property type="project" value="UniProtKB-UniRule"/>
</dbReference>
<dbReference type="GO" id="GO:0008270">
    <property type="term" value="F:zinc ion binding"/>
    <property type="evidence" value="ECO:0007669"/>
    <property type="project" value="InterPro"/>
</dbReference>
<dbReference type="GO" id="GO:0051301">
    <property type="term" value="P:cell division"/>
    <property type="evidence" value="ECO:0007669"/>
    <property type="project" value="TreeGrafter"/>
</dbReference>
<dbReference type="GO" id="GO:0051603">
    <property type="term" value="P:proteolysis involved in protein catabolic process"/>
    <property type="evidence" value="ECO:0007669"/>
    <property type="project" value="TreeGrafter"/>
</dbReference>
<dbReference type="CDD" id="cd19497">
    <property type="entry name" value="RecA-like_ClpX"/>
    <property type="match status" value="1"/>
</dbReference>
<dbReference type="FunFam" id="1.10.8.60:FF:000002">
    <property type="entry name" value="ATP-dependent Clp protease ATP-binding subunit ClpX"/>
    <property type="match status" value="1"/>
</dbReference>
<dbReference type="FunFam" id="3.40.50.300:FF:000005">
    <property type="entry name" value="ATP-dependent Clp protease ATP-binding subunit ClpX"/>
    <property type="match status" value="1"/>
</dbReference>
<dbReference type="Gene3D" id="1.10.8.60">
    <property type="match status" value="1"/>
</dbReference>
<dbReference type="Gene3D" id="6.20.220.10">
    <property type="entry name" value="ClpX chaperone, C4-type zinc finger domain"/>
    <property type="match status" value="1"/>
</dbReference>
<dbReference type="Gene3D" id="3.40.50.300">
    <property type="entry name" value="P-loop containing nucleotide triphosphate hydrolases"/>
    <property type="match status" value="1"/>
</dbReference>
<dbReference type="HAMAP" id="MF_00175">
    <property type="entry name" value="ClpX"/>
    <property type="match status" value="1"/>
</dbReference>
<dbReference type="InterPro" id="IPR003593">
    <property type="entry name" value="AAA+_ATPase"/>
</dbReference>
<dbReference type="InterPro" id="IPR050052">
    <property type="entry name" value="ATP-dep_Clp_protease_ClpX"/>
</dbReference>
<dbReference type="InterPro" id="IPR003959">
    <property type="entry name" value="ATPase_AAA_core"/>
</dbReference>
<dbReference type="InterPro" id="IPR019489">
    <property type="entry name" value="Clp_ATPase_C"/>
</dbReference>
<dbReference type="InterPro" id="IPR004487">
    <property type="entry name" value="Clp_protease_ATP-bd_su_ClpX"/>
</dbReference>
<dbReference type="InterPro" id="IPR046425">
    <property type="entry name" value="ClpX_bact"/>
</dbReference>
<dbReference type="InterPro" id="IPR027417">
    <property type="entry name" value="P-loop_NTPase"/>
</dbReference>
<dbReference type="InterPro" id="IPR010603">
    <property type="entry name" value="Znf_CppX_C4"/>
</dbReference>
<dbReference type="InterPro" id="IPR038366">
    <property type="entry name" value="Znf_CppX_C4_sf"/>
</dbReference>
<dbReference type="NCBIfam" id="TIGR00382">
    <property type="entry name" value="clpX"/>
    <property type="match status" value="1"/>
</dbReference>
<dbReference type="NCBIfam" id="NF003745">
    <property type="entry name" value="PRK05342.1"/>
    <property type="match status" value="1"/>
</dbReference>
<dbReference type="PANTHER" id="PTHR48102:SF7">
    <property type="entry name" value="ATP-DEPENDENT CLP PROTEASE ATP-BINDING SUBUNIT CLPX-LIKE, MITOCHONDRIAL"/>
    <property type="match status" value="1"/>
</dbReference>
<dbReference type="PANTHER" id="PTHR48102">
    <property type="entry name" value="ATP-DEPENDENT CLP PROTEASE ATP-BINDING SUBUNIT CLPX-LIKE, MITOCHONDRIAL-RELATED"/>
    <property type="match status" value="1"/>
</dbReference>
<dbReference type="Pfam" id="PF07724">
    <property type="entry name" value="AAA_2"/>
    <property type="match status" value="1"/>
</dbReference>
<dbReference type="Pfam" id="PF10431">
    <property type="entry name" value="ClpB_D2-small"/>
    <property type="match status" value="1"/>
</dbReference>
<dbReference type="Pfam" id="PF06689">
    <property type="entry name" value="zf-C4_ClpX"/>
    <property type="match status" value="1"/>
</dbReference>
<dbReference type="SMART" id="SM00382">
    <property type="entry name" value="AAA"/>
    <property type="match status" value="1"/>
</dbReference>
<dbReference type="SMART" id="SM01086">
    <property type="entry name" value="ClpB_D2-small"/>
    <property type="match status" value="1"/>
</dbReference>
<dbReference type="SMART" id="SM00994">
    <property type="entry name" value="zf-C4_ClpX"/>
    <property type="match status" value="1"/>
</dbReference>
<dbReference type="SUPFAM" id="SSF57716">
    <property type="entry name" value="Glucocorticoid receptor-like (DNA-binding domain)"/>
    <property type="match status" value="1"/>
</dbReference>
<dbReference type="SUPFAM" id="SSF52540">
    <property type="entry name" value="P-loop containing nucleoside triphosphate hydrolases"/>
    <property type="match status" value="1"/>
</dbReference>
<dbReference type="PROSITE" id="PS51902">
    <property type="entry name" value="CLPX_ZB"/>
    <property type="match status" value="1"/>
</dbReference>
<feature type="chain" id="PRO_1000189687" description="ATP-dependent Clp protease ATP-binding subunit ClpX">
    <location>
        <begin position="1"/>
        <end position="411"/>
    </location>
</feature>
<feature type="domain" description="ClpX-type ZB" evidence="2">
    <location>
        <begin position="1"/>
        <end position="49"/>
    </location>
</feature>
<feature type="binding site" evidence="2">
    <location>
        <position position="8"/>
    </location>
    <ligand>
        <name>Zn(2+)</name>
        <dbReference type="ChEBI" id="CHEBI:29105"/>
    </ligand>
</feature>
<feature type="binding site" evidence="2">
    <location>
        <position position="11"/>
    </location>
    <ligand>
        <name>Zn(2+)</name>
        <dbReference type="ChEBI" id="CHEBI:29105"/>
    </ligand>
</feature>
<feature type="binding site" evidence="2">
    <location>
        <position position="30"/>
    </location>
    <ligand>
        <name>Zn(2+)</name>
        <dbReference type="ChEBI" id="CHEBI:29105"/>
    </ligand>
</feature>
<feature type="binding site" evidence="2">
    <location>
        <position position="33"/>
    </location>
    <ligand>
        <name>Zn(2+)</name>
        <dbReference type="ChEBI" id="CHEBI:29105"/>
    </ligand>
</feature>
<feature type="binding site" evidence="1">
    <location>
        <begin position="115"/>
        <end position="122"/>
    </location>
    <ligand>
        <name>ATP</name>
        <dbReference type="ChEBI" id="CHEBI:30616"/>
    </ligand>
</feature>
<keyword id="KW-0067">ATP-binding</keyword>
<keyword id="KW-0143">Chaperone</keyword>
<keyword id="KW-0479">Metal-binding</keyword>
<keyword id="KW-0547">Nucleotide-binding</keyword>
<keyword id="KW-0862">Zinc</keyword>
<reference key="1">
    <citation type="journal article" date="2014" name="Genome Announc.">
        <title>Complete Genome Sequence of the Extreme Thermophile Dictyoglomus thermophilum H-6-12.</title>
        <authorList>
            <person name="Coil D.A."/>
            <person name="Badger J.H."/>
            <person name="Forberger H.C."/>
            <person name="Riggs F."/>
            <person name="Madupu R."/>
            <person name="Fedorova N."/>
            <person name="Ward N."/>
            <person name="Robb F.T."/>
            <person name="Eisen J.A."/>
        </authorList>
    </citation>
    <scope>NUCLEOTIDE SEQUENCE [LARGE SCALE GENOMIC DNA]</scope>
    <source>
        <strain>ATCC 35947 / DSM 3960 / H-6-12</strain>
    </source>
</reference>
<evidence type="ECO:0000255" key="1">
    <source>
        <dbReference type="HAMAP-Rule" id="MF_00175"/>
    </source>
</evidence>
<evidence type="ECO:0000255" key="2">
    <source>
        <dbReference type="PROSITE-ProRule" id="PRU01250"/>
    </source>
</evidence>
<comment type="function">
    <text evidence="1">ATP-dependent specificity component of the Clp protease. It directs the protease to specific substrates. Can perform chaperone functions in the absence of ClpP.</text>
</comment>
<comment type="subunit">
    <text evidence="1">Component of the ClpX-ClpP complex. Forms a hexameric ring that, in the presence of ATP, binds to fourteen ClpP subunits assembled into a disk-like structure with a central cavity, resembling the structure of eukaryotic proteasomes.</text>
</comment>
<comment type="similarity">
    <text evidence="1">Belongs to the ClpX chaperone family.</text>
</comment>
<protein>
    <recommendedName>
        <fullName evidence="1">ATP-dependent Clp protease ATP-binding subunit ClpX</fullName>
    </recommendedName>
</protein>
<sequence>MSDRDIRCSFCGRTQKEVKKLIAGPGVYICDECVKLAYDIIEEDEEEDVTEEFEDFVLPKPHEIKNFLDQYVIGQERAKKILSVAVYNHYKRIFMKSKITEDVEIQKSNILLIGPTGVGKTLLAETLAKFLKVPFAIADATTLTEAGYVGEDVENILLRLIQNADWDIKRAEKGIVYIDEIDKISRKSENPSITRDVSGEGVQQALLRIVEGTIANVPPQGGRKHPYQEFIQINTKDILFIAGGSFEGIEKIVEKRLDVSSIGFGAQIEPKNRKSLTQILNHIIPEDLIKFGMIPEFVGRFPVVAVLEPLSEEALLKILTEPKNALVKQYKALLSIEGVEIDFTDEALRSIVKEALEKATGARGLRAVMEELMLDLMYELPNLGIKRFTITPELVYNRGKISQELLKKLAG</sequence>
<name>CLPX_DICT6</name>
<proteinExistence type="inferred from homology"/>